<dbReference type="EC" id="2.7.7.6" evidence="1"/>
<dbReference type="EMBL" id="CP000781">
    <property type="protein sequence ID" value="ABS69061.1"/>
    <property type="molecule type" value="Genomic_DNA"/>
</dbReference>
<dbReference type="SMR" id="A7IM18"/>
<dbReference type="STRING" id="78245.Xaut_3837"/>
<dbReference type="KEGG" id="xau:Xaut_3837"/>
<dbReference type="eggNOG" id="COG1758">
    <property type="taxonomic scope" value="Bacteria"/>
</dbReference>
<dbReference type="HOGENOM" id="CLU_125406_2_0_5"/>
<dbReference type="OrthoDB" id="9796300at2"/>
<dbReference type="PhylomeDB" id="A7IM18"/>
<dbReference type="Proteomes" id="UP000002417">
    <property type="component" value="Chromosome"/>
</dbReference>
<dbReference type="GO" id="GO:0000428">
    <property type="term" value="C:DNA-directed RNA polymerase complex"/>
    <property type="evidence" value="ECO:0007669"/>
    <property type="project" value="UniProtKB-KW"/>
</dbReference>
<dbReference type="GO" id="GO:0003677">
    <property type="term" value="F:DNA binding"/>
    <property type="evidence" value="ECO:0007669"/>
    <property type="project" value="UniProtKB-UniRule"/>
</dbReference>
<dbReference type="GO" id="GO:0003899">
    <property type="term" value="F:DNA-directed RNA polymerase activity"/>
    <property type="evidence" value="ECO:0007669"/>
    <property type="project" value="UniProtKB-UniRule"/>
</dbReference>
<dbReference type="GO" id="GO:0006351">
    <property type="term" value="P:DNA-templated transcription"/>
    <property type="evidence" value="ECO:0007669"/>
    <property type="project" value="UniProtKB-UniRule"/>
</dbReference>
<dbReference type="Gene3D" id="3.90.940.10">
    <property type="match status" value="1"/>
</dbReference>
<dbReference type="HAMAP" id="MF_00366">
    <property type="entry name" value="RNApol_bact_RpoZ"/>
    <property type="match status" value="1"/>
</dbReference>
<dbReference type="InterPro" id="IPR003716">
    <property type="entry name" value="DNA-dir_RNA_pol_omega"/>
</dbReference>
<dbReference type="InterPro" id="IPR006110">
    <property type="entry name" value="Pol_omega/Rpo6/RPB6"/>
</dbReference>
<dbReference type="InterPro" id="IPR036161">
    <property type="entry name" value="RPB6/omega-like_sf"/>
</dbReference>
<dbReference type="NCBIfam" id="TIGR00690">
    <property type="entry name" value="rpoZ"/>
    <property type="match status" value="1"/>
</dbReference>
<dbReference type="PANTHER" id="PTHR34476">
    <property type="entry name" value="DNA-DIRECTED RNA POLYMERASE SUBUNIT OMEGA"/>
    <property type="match status" value="1"/>
</dbReference>
<dbReference type="PANTHER" id="PTHR34476:SF1">
    <property type="entry name" value="DNA-DIRECTED RNA POLYMERASE SUBUNIT OMEGA"/>
    <property type="match status" value="1"/>
</dbReference>
<dbReference type="Pfam" id="PF01192">
    <property type="entry name" value="RNA_pol_Rpb6"/>
    <property type="match status" value="1"/>
</dbReference>
<dbReference type="SMART" id="SM01409">
    <property type="entry name" value="RNA_pol_Rpb6"/>
    <property type="match status" value="1"/>
</dbReference>
<dbReference type="SUPFAM" id="SSF63562">
    <property type="entry name" value="RPB6/omega subunit-like"/>
    <property type="match status" value="1"/>
</dbReference>
<organism>
    <name type="scientific">Xanthobacter autotrophicus (strain ATCC BAA-1158 / Py2)</name>
    <dbReference type="NCBI Taxonomy" id="78245"/>
    <lineage>
        <taxon>Bacteria</taxon>
        <taxon>Pseudomonadati</taxon>
        <taxon>Pseudomonadota</taxon>
        <taxon>Alphaproteobacteria</taxon>
        <taxon>Hyphomicrobiales</taxon>
        <taxon>Xanthobacteraceae</taxon>
        <taxon>Xanthobacter</taxon>
    </lineage>
</organism>
<evidence type="ECO:0000255" key="1">
    <source>
        <dbReference type="HAMAP-Rule" id="MF_00366"/>
    </source>
</evidence>
<evidence type="ECO:0000256" key="2">
    <source>
        <dbReference type="SAM" id="MobiDB-lite"/>
    </source>
</evidence>
<comment type="function">
    <text evidence="1">Promotes RNA polymerase assembly. Latches the N- and C-terminal regions of the beta' subunit thereby facilitating its interaction with the beta and alpha subunits.</text>
</comment>
<comment type="catalytic activity">
    <reaction evidence="1">
        <text>RNA(n) + a ribonucleoside 5'-triphosphate = RNA(n+1) + diphosphate</text>
        <dbReference type="Rhea" id="RHEA:21248"/>
        <dbReference type="Rhea" id="RHEA-COMP:14527"/>
        <dbReference type="Rhea" id="RHEA-COMP:17342"/>
        <dbReference type="ChEBI" id="CHEBI:33019"/>
        <dbReference type="ChEBI" id="CHEBI:61557"/>
        <dbReference type="ChEBI" id="CHEBI:140395"/>
        <dbReference type="EC" id="2.7.7.6"/>
    </reaction>
</comment>
<comment type="subunit">
    <text evidence="1">The RNAP catalytic core consists of 2 alpha, 1 beta, 1 beta' and 1 omega subunit. When a sigma factor is associated with the core the holoenzyme is formed, which can initiate transcription.</text>
</comment>
<comment type="similarity">
    <text evidence="1">Belongs to the RNA polymerase subunit omega family.</text>
</comment>
<accession>A7IM18</accession>
<feature type="chain" id="PRO_1000121291" description="DNA-directed RNA polymerase subunit omega">
    <location>
        <begin position="1"/>
        <end position="129"/>
    </location>
</feature>
<feature type="region of interest" description="Disordered" evidence="2">
    <location>
        <begin position="76"/>
        <end position="100"/>
    </location>
</feature>
<sequence length="129" mass="14180">MARVTVEDCIDKVDNRFELVLLAAHRARMISSGAQITVDRDNDKNPVVALREIADEHVGPEDLKEDLIHSLQKYTEVDEPEPEAVPMIASGDSSGGEDSDVMLDRMTEEELLAGLQGLVPPEHTDDDEG</sequence>
<gene>
    <name evidence="1" type="primary">rpoZ</name>
    <name type="ordered locus">Xaut_3837</name>
</gene>
<keyword id="KW-0240">DNA-directed RNA polymerase</keyword>
<keyword id="KW-0548">Nucleotidyltransferase</keyword>
<keyword id="KW-1185">Reference proteome</keyword>
<keyword id="KW-0804">Transcription</keyword>
<keyword id="KW-0808">Transferase</keyword>
<name>RPOZ_XANP2</name>
<reference key="1">
    <citation type="submission" date="2007-07" db="EMBL/GenBank/DDBJ databases">
        <title>Complete sequence of chromosome of Xanthobacter autotrophicus Py2.</title>
        <authorList>
            <consortium name="US DOE Joint Genome Institute"/>
            <person name="Copeland A."/>
            <person name="Lucas S."/>
            <person name="Lapidus A."/>
            <person name="Barry K."/>
            <person name="Glavina del Rio T."/>
            <person name="Hammon N."/>
            <person name="Israni S."/>
            <person name="Dalin E."/>
            <person name="Tice H."/>
            <person name="Pitluck S."/>
            <person name="Sims D."/>
            <person name="Brettin T."/>
            <person name="Bruce D."/>
            <person name="Detter J.C."/>
            <person name="Han C."/>
            <person name="Tapia R."/>
            <person name="Brainard J."/>
            <person name="Schmutz J."/>
            <person name="Larimer F."/>
            <person name="Land M."/>
            <person name="Hauser L."/>
            <person name="Kyrpides N."/>
            <person name="Kim E."/>
            <person name="Ensigns S.A."/>
            <person name="Richardson P."/>
        </authorList>
    </citation>
    <scope>NUCLEOTIDE SEQUENCE [LARGE SCALE GENOMIC DNA]</scope>
    <source>
        <strain>ATCC BAA-1158 / Py2</strain>
    </source>
</reference>
<proteinExistence type="inferred from homology"/>
<protein>
    <recommendedName>
        <fullName evidence="1">DNA-directed RNA polymerase subunit omega</fullName>
        <shortName evidence="1">RNAP omega subunit</shortName>
        <ecNumber evidence="1">2.7.7.6</ecNumber>
    </recommendedName>
    <alternativeName>
        <fullName evidence="1">RNA polymerase omega subunit</fullName>
    </alternativeName>
    <alternativeName>
        <fullName evidence="1">Transcriptase subunit omega</fullName>
    </alternativeName>
</protein>